<organism>
    <name type="scientific">Shewanella baltica (strain OS155 / ATCC BAA-1091)</name>
    <dbReference type="NCBI Taxonomy" id="325240"/>
    <lineage>
        <taxon>Bacteria</taxon>
        <taxon>Pseudomonadati</taxon>
        <taxon>Pseudomonadota</taxon>
        <taxon>Gammaproteobacteria</taxon>
        <taxon>Alteromonadales</taxon>
        <taxon>Shewanellaceae</taxon>
        <taxon>Shewanella</taxon>
    </lineage>
</organism>
<comment type="function">
    <text evidence="1">Murein-degrading enzyme that degrades murein glycan strands and insoluble, high-molecular weight murein sacculi, with the concomitant formation of a 1,6-anhydromuramoyl product. Lytic transglycosylases (LTs) play an integral role in the metabolism of the peptidoglycan (PG) sacculus. Their lytic action creates space within the PG sacculus to allow for its expansion as well as for the insertion of various structures such as secretion systems and flagella.</text>
</comment>
<comment type="catalytic activity">
    <reaction evidence="1">
        <text>Exolytic cleavage of the (1-&gt;4)-beta-glycosidic linkage between N-acetylmuramic acid (MurNAc) and N-acetylglucosamine (GlcNAc) residues in peptidoglycan, from either the reducing or the non-reducing ends of the peptidoglycan chains, with concomitant formation of a 1,6-anhydrobond in the MurNAc residue.</text>
        <dbReference type="EC" id="4.2.2.n1"/>
    </reaction>
</comment>
<comment type="subcellular location">
    <subcellularLocation>
        <location>Cell outer membrane</location>
        <topology>Peripheral membrane protein</topology>
    </subcellularLocation>
    <text evidence="1">Attached to the inner leaflet of the outer membrane.</text>
</comment>
<comment type="domain">
    <text evidence="1">The N-terminal domain does not have lytic activity and probably modulates enzymatic activity. The C-terminal domain is the catalytic active domain.</text>
</comment>
<comment type="similarity">
    <text evidence="1">In the N-terminal section; belongs to the bacterial solute-binding protein 3 family.</text>
</comment>
<comment type="similarity">
    <text evidence="1">In the C-terminal section; belongs to the transglycosylase Slt family.</text>
</comment>
<gene>
    <name evidence="1" type="primary">mltF</name>
    <name type="ordered locus">Sbal_2981</name>
</gene>
<sequence length="476" mass="54652">MTRFLFALILGFLLTACQQVTVDETEFVPKKLTELRVGTLYGPQIYMTSGQGDSGFDYDMAVLFAEYLDVPLKMVPYTNRTELYEALKKNEIDLIAAGMTETPARREQFRLGPPLYRVNQVLVYREGMPAPKDISDLKGKITVIADSSFVETLTQLQKHYPTLVWDQITDKDSEELLAMIANKEIDYTIADSSSVQINRRYLPDLRSGPVLEEKLDVVWLLPPTRSDELMSQLLAFWHQEKLAGTLDHLNEKYFGHVKRFDYVDTRAFIRAIETVLPRYRQLFETHAGNLDWRKLAATSYQESHWNPHARSATGVRGMMMLTQPTAKEIGITNRLDAEESIRGGAAYLNDMINRLPESIPESQRMWFALASYNIGYAHVEDARKLAESMELNPNAWRDLKKVLPLLQKRKYYQKTRYGYARGSEAVHYVDSIRRYYDTLVWVDNQSKQQNPEEEPSDLASEEPAIPAGTLSPEQPK</sequence>
<feature type="signal peptide" evidence="1">
    <location>
        <begin position="1"/>
        <end position="22"/>
    </location>
</feature>
<feature type="chain" id="PRO_5000224697" description="Membrane-bound lytic murein transglycosylase F">
    <location>
        <begin position="23"/>
        <end position="476"/>
    </location>
</feature>
<feature type="region of interest" description="Non-LT domain" evidence="1">
    <location>
        <begin position="23"/>
        <end position="257"/>
    </location>
</feature>
<feature type="region of interest" description="LT domain" evidence="1">
    <location>
        <begin position="258"/>
        <end position="476"/>
    </location>
</feature>
<feature type="region of interest" description="Disordered" evidence="2">
    <location>
        <begin position="446"/>
        <end position="476"/>
    </location>
</feature>
<feature type="compositionally biased region" description="Acidic residues" evidence="2">
    <location>
        <begin position="451"/>
        <end position="460"/>
    </location>
</feature>
<feature type="active site" evidence="1">
    <location>
        <position position="302"/>
    </location>
</feature>
<name>MLTF_SHEB5</name>
<keyword id="KW-0998">Cell outer membrane</keyword>
<keyword id="KW-0961">Cell wall biogenesis/degradation</keyword>
<keyword id="KW-0456">Lyase</keyword>
<keyword id="KW-0472">Membrane</keyword>
<keyword id="KW-1185">Reference proteome</keyword>
<keyword id="KW-0732">Signal</keyword>
<protein>
    <recommendedName>
        <fullName evidence="1">Membrane-bound lytic murein transglycosylase F</fullName>
        <ecNumber evidence="1">4.2.2.n1</ecNumber>
    </recommendedName>
    <alternativeName>
        <fullName evidence="1">Murein lyase F</fullName>
    </alternativeName>
</protein>
<dbReference type="EC" id="4.2.2.n1" evidence="1"/>
<dbReference type="EMBL" id="CP000563">
    <property type="protein sequence ID" value="ABN62463.1"/>
    <property type="molecule type" value="Genomic_DNA"/>
</dbReference>
<dbReference type="RefSeq" id="WP_006082473.1">
    <property type="nucleotide sequence ID" value="NC_009052.1"/>
</dbReference>
<dbReference type="SMR" id="A3D6V0"/>
<dbReference type="STRING" id="325240.Sbal_2981"/>
<dbReference type="CAZy" id="GH23">
    <property type="family name" value="Glycoside Hydrolase Family 23"/>
</dbReference>
<dbReference type="GeneID" id="11773196"/>
<dbReference type="KEGG" id="sbl:Sbal_2981"/>
<dbReference type="HOGENOM" id="CLU_027494_0_1_6"/>
<dbReference type="OrthoDB" id="9815002at2"/>
<dbReference type="Proteomes" id="UP000001557">
    <property type="component" value="Chromosome"/>
</dbReference>
<dbReference type="GO" id="GO:0009279">
    <property type="term" value="C:cell outer membrane"/>
    <property type="evidence" value="ECO:0007669"/>
    <property type="project" value="UniProtKB-SubCell"/>
</dbReference>
<dbReference type="GO" id="GO:0008933">
    <property type="term" value="F:peptidoglycan lytic transglycosylase activity"/>
    <property type="evidence" value="ECO:0007669"/>
    <property type="project" value="UniProtKB-UniRule"/>
</dbReference>
<dbReference type="GO" id="GO:0016998">
    <property type="term" value="P:cell wall macromolecule catabolic process"/>
    <property type="evidence" value="ECO:0007669"/>
    <property type="project" value="UniProtKB-UniRule"/>
</dbReference>
<dbReference type="GO" id="GO:0071555">
    <property type="term" value="P:cell wall organization"/>
    <property type="evidence" value="ECO:0007669"/>
    <property type="project" value="UniProtKB-KW"/>
</dbReference>
<dbReference type="GO" id="GO:0009253">
    <property type="term" value="P:peptidoglycan catabolic process"/>
    <property type="evidence" value="ECO:0007669"/>
    <property type="project" value="TreeGrafter"/>
</dbReference>
<dbReference type="CDD" id="cd13403">
    <property type="entry name" value="MLTF-like"/>
    <property type="match status" value="1"/>
</dbReference>
<dbReference type="CDD" id="cd01009">
    <property type="entry name" value="PBP2_YfhD_N"/>
    <property type="match status" value="1"/>
</dbReference>
<dbReference type="FunFam" id="1.10.530.10:FF:000003">
    <property type="entry name" value="Membrane-bound lytic murein transglycosylase F"/>
    <property type="match status" value="1"/>
</dbReference>
<dbReference type="Gene3D" id="1.10.530.10">
    <property type="match status" value="1"/>
</dbReference>
<dbReference type="Gene3D" id="3.40.190.10">
    <property type="entry name" value="Periplasmic binding protein-like II"/>
    <property type="match status" value="2"/>
</dbReference>
<dbReference type="HAMAP" id="MF_02016">
    <property type="entry name" value="MltF"/>
    <property type="match status" value="1"/>
</dbReference>
<dbReference type="InterPro" id="IPR023346">
    <property type="entry name" value="Lysozyme-like_dom_sf"/>
</dbReference>
<dbReference type="InterPro" id="IPR023703">
    <property type="entry name" value="MltF"/>
</dbReference>
<dbReference type="InterPro" id="IPR001638">
    <property type="entry name" value="Solute-binding_3/MltF_N"/>
</dbReference>
<dbReference type="InterPro" id="IPR008258">
    <property type="entry name" value="Transglycosylase_SLT_dom_1"/>
</dbReference>
<dbReference type="NCBIfam" id="NF008112">
    <property type="entry name" value="PRK10859.1"/>
    <property type="match status" value="1"/>
</dbReference>
<dbReference type="PANTHER" id="PTHR35936">
    <property type="entry name" value="MEMBRANE-BOUND LYTIC MUREIN TRANSGLYCOSYLASE F"/>
    <property type="match status" value="1"/>
</dbReference>
<dbReference type="PANTHER" id="PTHR35936:SF32">
    <property type="entry name" value="MEMBRANE-BOUND LYTIC MUREIN TRANSGLYCOSYLASE F"/>
    <property type="match status" value="1"/>
</dbReference>
<dbReference type="Pfam" id="PF00497">
    <property type="entry name" value="SBP_bac_3"/>
    <property type="match status" value="1"/>
</dbReference>
<dbReference type="Pfam" id="PF01464">
    <property type="entry name" value="SLT"/>
    <property type="match status" value="1"/>
</dbReference>
<dbReference type="SMART" id="SM00062">
    <property type="entry name" value="PBPb"/>
    <property type="match status" value="1"/>
</dbReference>
<dbReference type="SUPFAM" id="SSF53955">
    <property type="entry name" value="Lysozyme-like"/>
    <property type="match status" value="1"/>
</dbReference>
<dbReference type="SUPFAM" id="SSF53850">
    <property type="entry name" value="Periplasmic binding protein-like II"/>
    <property type="match status" value="1"/>
</dbReference>
<dbReference type="PROSITE" id="PS51257">
    <property type="entry name" value="PROKAR_LIPOPROTEIN"/>
    <property type="match status" value="1"/>
</dbReference>
<evidence type="ECO:0000255" key="1">
    <source>
        <dbReference type="HAMAP-Rule" id="MF_02016"/>
    </source>
</evidence>
<evidence type="ECO:0000256" key="2">
    <source>
        <dbReference type="SAM" id="MobiDB-lite"/>
    </source>
</evidence>
<proteinExistence type="inferred from homology"/>
<accession>A3D6V0</accession>
<reference key="1">
    <citation type="submission" date="2007-02" db="EMBL/GenBank/DDBJ databases">
        <title>Complete sequence of chromosome of Shewanella baltica OS155.</title>
        <authorList>
            <consortium name="US DOE Joint Genome Institute"/>
            <person name="Copeland A."/>
            <person name="Lucas S."/>
            <person name="Lapidus A."/>
            <person name="Barry K."/>
            <person name="Detter J.C."/>
            <person name="Glavina del Rio T."/>
            <person name="Hammon N."/>
            <person name="Israni S."/>
            <person name="Dalin E."/>
            <person name="Tice H."/>
            <person name="Pitluck S."/>
            <person name="Sims D.R."/>
            <person name="Brettin T."/>
            <person name="Bruce D."/>
            <person name="Han C."/>
            <person name="Tapia R."/>
            <person name="Brainard J."/>
            <person name="Schmutz J."/>
            <person name="Larimer F."/>
            <person name="Land M."/>
            <person name="Hauser L."/>
            <person name="Kyrpides N."/>
            <person name="Mikhailova N."/>
            <person name="Brettar I."/>
            <person name="Klappenbach J."/>
            <person name="Konstantinidis K."/>
            <person name="Rodrigues J."/>
            <person name="Tiedje J."/>
            <person name="Richardson P."/>
        </authorList>
    </citation>
    <scope>NUCLEOTIDE SEQUENCE [LARGE SCALE GENOMIC DNA]</scope>
    <source>
        <strain>OS155 / ATCC BAA-1091</strain>
    </source>
</reference>